<reference key="1">
    <citation type="journal article" date="2000" name="Science">
        <title>Complete genome sequence of Neisseria meningitidis serogroup B strain MC58.</title>
        <authorList>
            <person name="Tettelin H."/>
            <person name="Saunders N.J."/>
            <person name="Heidelberg J.F."/>
            <person name="Jeffries A.C."/>
            <person name="Nelson K.E."/>
            <person name="Eisen J.A."/>
            <person name="Ketchum K.A."/>
            <person name="Hood D.W."/>
            <person name="Peden J.F."/>
            <person name="Dodson R.J."/>
            <person name="Nelson W.C."/>
            <person name="Gwinn M.L."/>
            <person name="DeBoy R.T."/>
            <person name="Peterson J.D."/>
            <person name="Hickey E.K."/>
            <person name="Haft D.H."/>
            <person name="Salzberg S.L."/>
            <person name="White O."/>
            <person name="Fleischmann R.D."/>
            <person name="Dougherty B.A."/>
            <person name="Mason T.M."/>
            <person name="Ciecko A."/>
            <person name="Parksey D.S."/>
            <person name="Blair E."/>
            <person name="Cittone H."/>
            <person name="Clark E.B."/>
            <person name="Cotton M.D."/>
            <person name="Utterback T.R."/>
            <person name="Khouri H.M."/>
            <person name="Qin H."/>
            <person name="Vamathevan J.J."/>
            <person name="Gill J."/>
            <person name="Scarlato V."/>
            <person name="Masignani V."/>
            <person name="Pizza M."/>
            <person name="Grandi G."/>
            <person name="Sun L."/>
            <person name="Smith H.O."/>
            <person name="Fraser C.M."/>
            <person name="Moxon E.R."/>
            <person name="Rappuoli R."/>
            <person name="Venter J.C."/>
        </authorList>
    </citation>
    <scope>NUCLEOTIDE SEQUENCE [LARGE SCALE GENOMIC DNA]</scope>
    <source>
        <strain>ATCC BAA-335 / MC58</strain>
    </source>
</reference>
<reference key="2">
    <citation type="journal article" date="1990" name="Can. J. Microbiol.">
        <title>Receptors for transferrin in pathogenic bacteria are specific for the host's protein.</title>
        <authorList>
            <person name="Schryvers A.B."/>
            <person name="Gonzalez G.C."/>
        </authorList>
    </citation>
    <scope>HOST-SPECIFICITY</scope>
</reference>
<reference key="3">
    <citation type="journal article" date="2016" name="Nat. Microbiol.">
        <title>Slam is an outer membrane protein that is required for the surface display of lipidated virulence factors in Neisseria.</title>
        <authorList>
            <person name="Hooda Y."/>
            <person name="Lai C.C."/>
            <person name="Judd A."/>
            <person name="Buckwalter C.M."/>
            <person name="Shin H.E."/>
            <person name="Gray-Owen S.D."/>
            <person name="Moraes T.F."/>
        </authorList>
    </citation>
    <scope>SUBCELLULAR LOCATION</scope>
    <source>
        <strain>ATCC BAA-335 / MC58</strain>
    </source>
</reference>
<reference evidence="12" key="4">
    <citation type="journal article" date="2012" name="Nature">
        <title>Structural basis for iron piracy by pathogenic Neisseria.</title>
        <authorList>
            <person name="Noinaj N."/>
            <person name="Easley N.C."/>
            <person name="Oke M."/>
            <person name="Mizuno N."/>
            <person name="Gumbart J."/>
            <person name="Boura E."/>
            <person name="Steere A.N."/>
            <person name="Zak O."/>
            <person name="Aisen P."/>
            <person name="Tajkhorshid E."/>
            <person name="Evans R.W."/>
            <person name="Gorringe A.R."/>
            <person name="Mason A.B."/>
            <person name="Steven A.C."/>
            <person name="Buchanan S.K."/>
        </authorList>
    </citation>
    <scope>X-RAY CRYSTALLOGRAPHY (2.40 ANGSTROMS) OF 22-712</scope>
    <scope>FUNCTION</scope>
    <scope>TRANSFERRIN-BINDING</scope>
    <scope>DOMAIN</scope>
    <scope>MUTAGENESIS OF GLN-218; PHE-220; GLN-225 AND PRO-226</scope>
    <source>
        <strain>K454 / Serogroup B</strain>
    </source>
</reference>
<sequence>MNNPLVNQAAMVLPVFLLSACLGGGGSFDLDSVDTEAPRPAPKYQDVFSEKPQAQKDQGGYGFAMRLKRRNWYPQAKEDEVKLDESDWEATGLPDEPKELPKRQKSVIEKVETDSDNNIYSSPYLKPSNHQNGNTGNGINQPKNQAKDYENFKYVYSGWFYKHAKREFNLKVEPKSAKNGDDGYIFYHGKEPSRQLPASGKITYKGVWHFATDTKKGQKFREIIQPSKSQGDRYSGFSGDDGEEYSNKNKSTLTDGQEGYGFTSNLEVDFHNKKLTGKLIRNNANTDNNQATTTQYYSLEAQVTGNRFNGKATATDKPQQNSETKEHPFVSDSSSLSGGFFGPQGEELGFRFLSDDQKVAVVGSAKTKDKPANGNTAAASGGTDAAASNGAAGTSSENGKLTTVLDAVELKLGDKEVQKLDNFSNAAQLVVDGIMIPLLPEASESGNNQANQGTNGGTAFTRKFDHTPESDKKDAQAGTQTNGAQTASNTAGDTNGKTKTYEVEVCCSNLNYLKYGMLTRKNSKSAMQAGESSSQADAKTEQVEQSMFLQGERTDEKEIPSEQNIVYRGSWYGYIANDKSTSWSGNASNATSGNRAEFTVNFADKKITGTLTADNRQEATFTIDGNIKDNGFEGTAKTAESGFDLDQSNTTRTPKAYITDAKVQGGFYGPKAEELGGWFAYPGDKQTKNATNASGNSSATVVFGAKRQQPVR</sequence>
<name>TBPB_NEIMB</name>
<evidence type="ECO:0000250" key="1"/>
<evidence type="ECO:0000250" key="2">
    <source>
        <dbReference type="UniProtKB" id="Q06988"/>
    </source>
</evidence>
<evidence type="ECO:0000256" key="3">
    <source>
        <dbReference type="SAM" id="MobiDB-lite"/>
    </source>
</evidence>
<evidence type="ECO:0000269" key="4">
    <source>
    </source>
</evidence>
<evidence type="ECO:0000269" key="5">
    <source>
    </source>
</evidence>
<evidence type="ECO:0000269" key="6">
    <source>
    </source>
</evidence>
<evidence type="ECO:0000303" key="7">
    <source>
    </source>
</evidence>
<evidence type="ECO:0000303" key="8">
    <source>
    </source>
</evidence>
<evidence type="ECO:0000303" key="9">
    <source>
    </source>
</evidence>
<evidence type="ECO:0000305" key="10"/>
<evidence type="ECO:0000305" key="11">
    <source>
    </source>
</evidence>
<evidence type="ECO:0007744" key="12">
    <source>
        <dbReference type="PDB" id="3V8U"/>
    </source>
</evidence>
<evidence type="ECO:0007829" key="13">
    <source>
        <dbReference type="PDB" id="3V8U"/>
    </source>
</evidence>
<accession>Q9K0V0</accession>
<gene>
    <name evidence="8" type="primary">tbpB</name>
    <name evidence="7" type="synonym">tbp2</name>
    <name type="ordered locus">NMB0460</name>
</gene>
<comment type="function">
    <text evidence="5">Neisseria acquires iron by extracting it from serum transferrin (TF) in its human host. Acts as a TF receptor and is required for TF utilization. Involved in the initial capture of TF. Helps select only those TF molecules that can be used as an iron source and concentrates them on the cell surface, maintaining the iron-loaded status of the TF C-terminal lobe until its delivery to TbpA.</text>
</comment>
<comment type="subunit">
    <text evidence="2 5">Binds only human holo-transferrin (TF), via the TF C-terminus. Forms a large complex with TF and TbpA (PubMed:22327295). Interacts via its C-terminal domain with Slam1 (By similarity).</text>
</comment>
<comment type="interaction">
    <interactant intactId="EBI-15968994">
        <id>Q9K0V0</id>
    </interactant>
    <interactant intactId="EBI-714319">
        <id>P02787</id>
        <label>TF</label>
    </interactant>
    <organismsDiffer>true</organismsDiffer>
    <experiments>2</experiments>
</comment>
<comment type="subcellular location">
    <subcellularLocation>
        <location evidence="11">Cell outer membrane</location>
        <topology evidence="10">Lipid-anchor</topology>
    </subcellularLocation>
    <subcellularLocation>
        <location evidence="6">Cell surface</location>
    </subcellularLocation>
    <text evidence="6">Requires Slam1 for surface expression in E.coli.</text>
</comment>
<comment type="domain">
    <text evidence="5">Has 2 lobes, each of which has an 8-strand beta barrel flanked on their N-terminus by a 4-strand handle domain. Electron microscopy suggests that in the TbpA-TbpB-TF complex, TF is captured directly above the loop domain of TbpA in a chamber of about 1000 Angstroms(3) formed by the 3 proteins, where interactions between the proteins serve to abstract iron 2 from TF.</text>
</comment>
<comment type="miscellaneous">
    <text evidence="4">N.meningitidis cells will only bind to human TF, not bovine or porcine TF, explaining at least in part the bacteria's inability to cause infection in non-human hosts.</text>
</comment>
<comment type="similarity">
    <text evidence="10">Belongs to the TbpB family. Isotype II subfamily.</text>
</comment>
<dbReference type="EMBL" id="AE002098">
    <property type="protein sequence ID" value="AAF40897.1"/>
    <property type="molecule type" value="Genomic_DNA"/>
</dbReference>
<dbReference type="PIR" id="E81196">
    <property type="entry name" value="E81196"/>
</dbReference>
<dbReference type="RefSeq" id="NP_273507.1">
    <property type="nucleotide sequence ID" value="NC_003112.2"/>
</dbReference>
<dbReference type="RefSeq" id="WP_010980796.1">
    <property type="nucleotide sequence ID" value="NC_003112.2"/>
</dbReference>
<dbReference type="PDB" id="3V8U">
    <property type="method" value="X-ray"/>
    <property type="resolution" value="2.40 A"/>
    <property type="chains" value="A/B=22-711"/>
</dbReference>
<dbReference type="PDBsum" id="3V8U"/>
<dbReference type="SMR" id="Q9K0V0"/>
<dbReference type="DIP" id="DIP-59654N"/>
<dbReference type="IntAct" id="Q9K0V0">
    <property type="interactions" value="2"/>
</dbReference>
<dbReference type="STRING" id="122586.NMB0460"/>
<dbReference type="PaxDb" id="122586-NMB0460"/>
<dbReference type="KEGG" id="nme:NMB0460"/>
<dbReference type="PATRIC" id="fig|122586.8.peg.600"/>
<dbReference type="HOGENOM" id="CLU_024250_0_0_4"/>
<dbReference type="InParanoid" id="Q9K0V0"/>
<dbReference type="OrthoDB" id="5673741at2"/>
<dbReference type="EvolutionaryTrace" id="Q9K0V0"/>
<dbReference type="Proteomes" id="UP000000425">
    <property type="component" value="Chromosome"/>
</dbReference>
<dbReference type="GO" id="GO:0009279">
    <property type="term" value="C:cell outer membrane"/>
    <property type="evidence" value="ECO:0007669"/>
    <property type="project" value="UniProtKB-SubCell"/>
</dbReference>
<dbReference type="GO" id="GO:0009986">
    <property type="term" value="C:cell surface"/>
    <property type="evidence" value="ECO:0007669"/>
    <property type="project" value="UniProtKB-SubCell"/>
</dbReference>
<dbReference type="GO" id="GO:0071281">
    <property type="term" value="P:cellular response to iron ion"/>
    <property type="evidence" value="ECO:0000269"/>
    <property type="project" value="CollecTF"/>
</dbReference>
<dbReference type="FunFam" id="2.40.128.240:FF:000001">
    <property type="entry name" value="Transferrin binding protein 2"/>
    <property type="match status" value="1"/>
</dbReference>
<dbReference type="FunFam" id="2.40.160.90:FF:000001">
    <property type="entry name" value="Transferrin-binding protein 2"/>
    <property type="match status" value="1"/>
</dbReference>
<dbReference type="FunFam" id="2.40.160.90:FF:000002">
    <property type="entry name" value="Transferrin-binding protein 2"/>
    <property type="match status" value="1"/>
</dbReference>
<dbReference type="Gene3D" id="2.40.128.240">
    <property type="match status" value="1"/>
</dbReference>
<dbReference type="Gene3D" id="2.40.128.250">
    <property type="match status" value="1"/>
</dbReference>
<dbReference type="Gene3D" id="2.40.160.90">
    <property type="match status" value="2"/>
</dbReference>
<dbReference type="InterPro" id="IPR011250">
    <property type="entry name" value="OMP/PagP_b-brl"/>
</dbReference>
<dbReference type="InterPro" id="IPR001677">
    <property type="entry name" value="TbpB_B_D"/>
</dbReference>
<dbReference type="InterPro" id="IPR035316">
    <property type="entry name" value="TbpB_C-lobe"/>
</dbReference>
<dbReference type="InterPro" id="IPR038197">
    <property type="entry name" value="TbpB_C-lobe_sf"/>
</dbReference>
<dbReference type="InterPro" id="IPR035313">
    <property type="entry name" value="TbpB_N-lobe"/>
</dbReference>
<dbReference type="InterPro" id="IPR038669">
    <property type="entry name" value="TbpB_N-lobe_sf"/>
</dbReference>
<dbReference type="Pfam" id="PF17484">
    <property type="entry name" value="TbpB_A"/>
    <property type="match status" value="1"/>
</dbReference>
<dbReference type="Pfam" id="PF01298">
    <property type="entry name" value="TbpB_B_D"/>
    <property type="match status" value="2"/>
</dbReference>
<dbReference type="Pfam" id="PF17483">
    <property type="entry name" value="TbpB_C"/>
    <property type="match status" value="1"/>
</dbReference>
<dbReference type="SUPFAM" id="SSF56925">
    <property type="entry name" value="OMPA-like"/>
    <property type="match status" value="2"/>
</dbReference>
<proteinExistence type="evidence at protein level"/>
<organism>
    <name type="scientific">Neisseria meningitidis serogroup B (strain ATCC BAA-335 / MC58)</name>
    <dbReference type="NCBI Taxonomy" id="122586"/>
    <lineage>
        <taxon>Bacteria</taxon>
        <taxon>Pseudomonadati</taxon>
        <taxon>Pseudomonadota</taxon>
        <taxon>Betaproteobacteria</taxon>
        <taxon>Neisseriales</taxon>
        <taxon>Neisseriaceae</taxon>
        <taxon>Neisseria</taxon>
    </lineage>
</organism>
<protein>
    <recommendedName>
        <fullName evidence="8">Transferrin-binding protein B</fullName>
        <shortName evidence="8">TbpB</shortName>
    </recommendedName>
    <alternativeName>
        <fullName evidence="9">Surface lipoprotein TbpB</fullName>
    </alternativeName>
    <alternativeName>
        <fullName>Transferrin-binding protein 2</fullName>
        <shortName>TBP-2</shortName>
    </alternativeName>
</protein>
<feature type="signal peptide" evidence="1">
    <location>
        <begin position="1"/>
        <end position="20"/>
    </location>
</feature>
<feature type="chain" id="PRO_0000018193" description="Transferrin-binding protein B">
    <location>
        <begin position="21"/>
        <end position="712"/>
    </location>
</feature>
<feature type="region of interest" description="N-terminal handle domain" evidence="5">
    <location>
        <begin position="59"/>
        <end position="196"/>
    </location>
</feature>
<feature type="region of interest" description="Disordered" evidence="3">
    <location>
        <begin position="78"/>
        <end position="104"/>
    </location>
</feature>
<feature type="region of interest" description="Disordered" evidence="3">
    <location>
        <begin position="123"/>
        <end position="144"/>
    </location>
</feature>
<feature type="region of interest" description="N-terminal beta barrel domain" evidence="5">
    <location>
        <begin position="197"/>
        <end position="367"/>
    </location>
</feature>
<feature type="region of interest" description="Disordered" evidence="3">
    <location>
        <begin position="223"/>
        <end position="256"/>
    </location>
</feature>
<feature type="region of interest" description="Disordered" evidence="3">
    <location>
        <begin position="309"/>
        <end position="338"/>
    </location>
</feature>
<feature type="region of interest" description="Disordered" evidence="3">
    <location>
        <begin position="364"/>
        <end position="398"/>
    </location>
</feature>
<feature type="region of interest" description="C-terminal handle domain" evidence="5">
    <location>
        <begin position="389"/>
        <end position="555"/>
    </location>
</feature>
<feature type="region of interest" description="Disordered" evidence="3">
    <location>
        <begin position="442"/>
        <end position="495"/>
    </location>
</feature>
<feature type="region of interest" description="C-terminal beta barrel domain" evidence="5">
    <location>
        <begin position="556"/>
        <end position="712"/>
    </location>
</feature>
<feature type="region of interest" description="Disordered" evidence="3">
    <location>
        <begin position="689"/>
        <end position="712"/>
    </location>
</feature>
<feature type="compositionally biased region" description="Basic and acidic residues" evidence="3">
    <location>
        <begin position="95"/>
        <end position="104"/>
    </location>
</feature>
<feature type="compositionally biased region" description="Polar residues" evidence="3">
    <location>
        <begin position="128"/>
        <end position="144"/>
    </location>
</feature>
<feature type="compositionally biased region" description="Low complexity" evidence="3">
    <location>
        <begin position="372"/>
        <end position="398"/>
    </location>
</feature>
<feature type="compositionally biased region" description="Low complexity" evidence="3">
    <location>
        <begin position="446"/>
        <end position="459"/>
    </location>
</feature>
<feature type="compositionally biased region" description="Basic and acidic residues" evidence="3">
    <location>
        <begin position="462"/>
        <end position="475"/>
    </location>
</feature>
<feature type="compositionally biased region" description="Polar residues" evidence="3">
    <location>
        <begin position="477"/>
        <end position="495"/>
    </location>
</feature>
<feature type="compositionally biased region" description="Polar residues" evidence="3">
    <location>
        <begin position="689"/>
        <end position="700"/>
    </location>
</feature>
<feature type="lipid moiety-binding region" description="N-palmitoyl cysteine" evidence="10">
    <location>
        <position position="21"/>
    </location>
</feature>
<feature type="lipid moiety-binding region" description="S-diacylglycerol cysteine" evidence="10">
    <location>
        <position position="21"/>
    </location>
</feature>
<feature type="mutagenesis site" description="Decreased binding to human transferrin (TF)." evidence="5">
    <original>Q</original>
    <variation>E</variation>
    <location>
        <position position="218"/>
    </location>
</feature>
<feature type="mutagenesis site" description="Decreased binding to TF." evidence="5">
    <original>F</original>
    <variation>E</variation>
    <location>
        <position position="220"/>
    </location>
</feature>
<feature type="mutagenesis site" description="Significantly decreased binding to TF." evidence="5">
    <original>Q</original>
    <variation>A</variation>
    <location>
        <position position="225"/>
    </location>
</feature>
<feature type="mutagenesis site" description="No longer binds TF." evidence="5">
    <original>Q</original>
    <variation>E</variation>
    <location>
        <position position="225"/>
    </location>
</feature>
<feature type="mutagenesis site" description="Wild-type binding to TF." evidence="5">
    <original>P</original>
    <variation>A</variation>
    <location>
        <position position="226"/>
    </location>
</feature>
<feature type="mutagenesis site" description="No longer binds TF." evidence="5">
    <original>P</original>
    <variation>E</variation>
    <variation>R</variation>
    <variation>W</variation>
    <location>
        <position position="226"/>
    </location>
</feature>
<feature type="strand" evidence="13">
    <location>
        <begin position="61"/>
        <end position="66"/>
    </location>
</feature>
<feature type="turn" evidence="13">
    <location>
        <begin position="74"/>
        <end position="77"/>
    </location>
</feature>
<feature type="helix" evidence="13">
    <location>
        <begin position="85"/>
        <end position="87"/>
    </location>
</feature>
<feature type="helix" evidence="13">
    <location>
        <begin position="102"/>
        <end position="109"/>
    </location>
</feature>
<feature type="strand" evidence="13">
    <location>
        <begin position="147"/>
        <end position="149"/>
    </location>
</feature>
<feature type="strand" evidence="13">
    <location>
        <begin position="153"/>
        <end position="172"/>
    </location>
</feature>
<feature type="strand" evidence="13">
    <location>
        <begin position="176"/>
        <end position="192"/>
    </location>
</feature>
<feature type="strand" evidence="13">
    <location>
        <begin position="194"/>
        <end position="199"/>
    </location>
</feature>
<feature type="strand" evidence="13">
    <location>
        <begin position="201"/>
        <end position="212"/>
    </location>
</feature>
<feature type="strand" evidence="13">
    <location>
        <begin position="214"/>
        <end position="216"/>
    </location>
</feature>
<feature type="turn" evidence="13">
    <location>
        <begin position="220"/>
        <end position="222"/>
    </location>
</feature>
<feature type="turn" evidence="13">
    <location>
        <begin position="230"/>
        <end position="232"/>
    </location>
</feature>
<feature type="strand" evidence="13">
    <location>
        <begin position="246"/>
        <end position="249"/>
    </location>
</feature>
<feature type="strand" evidence="13">
    <location>
        <begin position="260"/>
        <end position="269"/>
    </location>
</feature>
<feature type="turn" evidence="13">
    <location>
        <begin position="270"/>
        <end position="273"/>
    </location>
</feature>
<feature type="strand" evidence="13">
    <location>
        <begin position="274"/>
        <end position="284"/>
    </location>
</feature>
<feature type="strand" evidence="13">
    <location>
        <begin position="297"/>
        <end position="304"/>
    </location>
</feature>
<feature type="strand" evidence="13">
    <location>
        <begin position="307"/>
        <end position="314"/>
    </location>
</feature>
<feature type="strand" evidence="13">
    <location>
        <begin position="321"/>
        <end position="323"/>
    </location>
</feature>
<feature type="strand" evidence="13">
    <location>
        <begin position="326"/>
        <end position="328"/>
    </location>
</feature>
<feature type="strand" evidence="13">
    <location>
        <begin position="333"/>
        <end position="342"/>
    </location>
</feature>
<feature type="strand" evidence="13">
    <location>
        <begin position="347"/>
        <end position="353"/>
    </location>
</feature>
<feature type="strand" evidence="13">
    <location>
        <begin position="359"/>
        <end position="365"/>
    </location>
</feature>
<feature type="strand" evidence="13">
    <location>
        <begin position="401"/>
        <end position="403"/>
    </location>
</feature>
<feature type="strand" evidence="13">
    <location>
        <begin position="405"/>
        <end position="411"/>
    </location>
</feature>
<feature type="strand" evidence="13">
    <location>
        <begin position="415"/>
        <end position="419"/>
    </location>
</feature>
<feature type="strand" evidence="13">
    <location>
        <begin position="428"/>
        <end position="431"/>
    </location>
</feature>
<feature type="strand" evidence="13">
    <location>
        <begin position="434"/>
        <end position="438"/>
    </location>
</feature>
<feature type="strand" evidence="13">
    <location>
        <begin position="461"/>
        <end position="466"/>
    </location>
</feature>
<feature type="strand" evidence="13">
    <location>
        <begin position="501"/>
        <end position="506"/>
    </location>
</feature>
<feature type="strand" evidence="13">
    <location>
        <begin position="511"/>
        <end position="520"/>
    </location>
</feature>
<feature type="strand" evidence="13">
    <location>
        <begin position="544"/>
        <end position="553"/>
    </location>
</feature>
<feature type="strand" evidence="13">
    <location>
        <begin position="565"/>
        <end position="580"/>
    </location>
</feature>
<feature type="strand" evidence="13">
    <location>
        <begin position="582"/>
        <end position="585"/>
    </location>
</feature>
<feature type="strand" evidence="13">
    <location>
        <begin position="590"/>
        <end position="601"/>
    </location>
</feature>
<feature type="turn" evidence="13">
    <location>
        <begin position="602"/>
        <end position="605"/>
    </location>
</feature>
<feature type="strand" evidence="13">
    <location>
        <begin position="606"/>
        <end position="612"/>
    </location>
</feature>
<feature type="strand" evidence="13">
    <location>
        <begin position="620"/>
        <end position="628"/>
    </location>
</feature>
<feature type="strand" evidence="13">
    <location>
        <begin position="631"/>
        <end position="637"/>
    </location>
</feature>
<feature type="strand" evidence="13">
    <location>
        <begin position="660"/>
        <end position="669"/>
    </location>
</feature>
<feature type="turn" evidence="13">
    <location>
        <begin position="670"/>
        <end position="672"/>
    </location>
</feature>
<feature type="strand" evidence="13">
    <location>
        <begin position="674"/>
        <end position="682"/>
    </location>
</feature>
<feature type="strand" evidence="13">
    <location>
        <begin position="697"/>
        <end position="707"/>
    </location>
</feature>
<keyword id="KW-0002">3D-structure</keyword>
<keyword id="KW-0998">Cell outer membrane</keyword>
<keyword id="KW-0449">Lipoprotein</keyword>
<keyword id="KW-0472">Membrane</keyword>
<keyword id="KW-0564">Palmitate</keyword>
<keyword id="KW-0675">Receptor</keyword>
<keyword id="KW-1185">Reference proteome</keyword>
<keyword id="KW-0732">Signal</keyword>
<keyword id="KW-0843">Virulence</keyword>